<comment type="function">
    <text evidence="1">Component of the ribosome quality control complex (RQC), a ribosome-associated complex that mediates ubiquitination and extraction of incompletely synthesized nascent chains for proteasomal degradation.</text>
</comment>
<comment type="subunit">
    <text evidence="1">Component of the ribosome quality control complex (RQC).</text>
</comment>
<comment type="subcellular location">
    <subcellularLocation>
        <location evidence="1">Nucleus</location>
    </subcellularLocation>
    <subcellularLocation>
        <location evidence="1">Cytoplasm</location>
        <location evidence="1">Cytosol</location>
    </subcellularLocation>
</comment>
<comment type="similarity">
    <text evidence="4">Belongs to the TCF25 family.</text>
</comment>
<sequence>MSTKALKKKQHINVQHVNSSSDEGSEKKVVVVVNSVKPKFSMLNLSDEDDDKSDQDENEDKKDSESEESEEEEEEEEIEKEKPQAKEQLSSKQQKQKQQQQASKKKQAKKKQQQKKKQQQQEKDELELNEIEKSSPPIILSEIEIKDKEFRELFKINTVNLNPDNELKKLFGCKSSDIKGQKKKSVHHFKKKNYIFVQPKPEWPDVMGGFMVMEICNDDKVPSSPTNATTTTTTTTTTTNTVSPKLKSQQQSLDGINYFKIKWGQTYSNIQEEFYLALTTHDPMSLVEIIRYHPYHIDSLLQLGQVCLQTADYSKAGDFVEMAVFAFENVFHHLFNPLNGNCRFEYRHDQNKSCFLAIFRFIQIIGRRACHRTALELCKILLTWDYSDPLYVRLIIDYYSIRSKQYRFLVDLFTKLKTITPTNQGDLSLLPNFCYSAALAMYHLEREKSTTTTSTSTSTSSSKSSSVEESSDILLQKALISFPMVLQPLLEKLKTNFSIPKNGKIITLENDPFFKDDPLEKRIDHLVTLFVERNYQCWQTPEILDWLKSNVIIVLDKVAAKHPMVKQLSDSIKAEYETVNQEVFDHLVLSEYSDVINRLTPDIIEAMHAEGFRDILPQRDPNQAPPQHLRRGGIGQGFQIHQRNQQQQRRVQQQLRQLQQQQQQNLQHQQQQPLEPLLQENPDYTGPANPVLNFLHSLLPWNDPSIQRERQLAATQGTQQPAPGFLDDYVDFSDEDENEN</sequence>
<keyword id="KW-0175">Coiled coil</keyword>
<keyword id="KW-0963">Cytoplasm</keyword>
<keyword id="KW-0238">DNA-binding</keyword>
<keyword id="KW-0539">Nucleus</keyword>
<keyword id="KW-1185">Reference proteome</keyword>
<keyword id="KW-0678">Repressor</keyword>
<keyword id="KW-0804">Transcription</keyword>
<keyword id="KW-0805">Transcription regulation</keyword>
<feature type="chain" id="PRO_0000363151" description="Ribosome quality control complex subunit TCF25">
    <location>
        <begin position="1"/>
        <end position="740"/>
    </location>
</feature>
<feature type="region of interest" description="Disordered" evidence="3">
    <location>
        <begin position="1"/>
        <end position="130"/>
    </location>
</feature>
<feature type="region of interest" description="Disordered" evidence="3">
    <location>
        <begin position="221"/>
        <end position="243"/>
    </location>
</feature>
<feature type="region of interest" description="Disordered" evidence="3">
    <location>
        <begin position="640"/>
        <end position="672"/>
    </location>
</feature>
<feature type="region of interest" description="Disordered" evidence="3">
    <location>
        <begin position="711"/>
        <end position="740"/>
    </location>
</feature>
<feature type="coiled-coil region" evidence="2">
    <location>
        <begin position="54"/>
        <end position="134"/>
    </location>
</feature>
<feature type="coiled-coil region" evidence="2">
    <location>
        <begin position="639"/>
        <end position="672"/>
    </location>
</feature>
<feature type="compositionally biased region" description="Basic residues" evidence="3">
    <location>
        <begin position="1"/>
        <end position="11"/>
    </location>
</feature>
<feature type="compositionally biased region" description="Low complexity" evidence="3">
    <location>
        <begin position="30"/>
        <end position="41"/>
    </location>
</feature>
<feature type="compositionally biased region" description="Acidic residues" evidence="3">
    <location>
        <begin position="46"/>
        <end position="58"/>
    </location>
</feature>
<feature type="compositionally biased region" description="Acidic residues" evidence="3">
    <location>
        <begin position="65"/>
        <end position="78"/>
    </location>
</feature>
<feature type="compositionally biased region" description="Low complexity" evidence="3">
    <location>
        <begin position="86"/>
        <end position="102"/>
    </location>
</feature>
<feature type="compositionally biased region" description="Basic residues" evidence="3">
    <location>
        <begin position="103"/>
        <end position="118"/>
    </location>
</feature>
<feature type="compositionally biased region" description="Low complexity" evidence="3">
    <location>
        <begin position="226"/>
        <end position="241"/>
    </location>
</feature>
<feature type="compositionally biased region" description="Low complexity" evidence="3">
    <location>
        <begin position="641"/>
        <end position="672"/>
    </location>
</feature>
<feature type="compositionally biased region" description="Acidic residues" evidence="3">
    <location>
        <begin position="728"/>
        <end position="740"/>
    </location>
</feature>
<gene>
    <name type="primary">tcf25</name>
    <name type="ORF">DDB_G0274217</name>
</gene>
<name>TCF25_DICDI</name>
<dbReference type="EMBL" id="AAFI02000012">
    <property type="protein sequence ID" value="EAL70001.1"/>
    <property type="molecule type" value="Genomic_DNA"/>
</dbReference>
<dbReference type="RefSeq" id="XP_644255.1">
    <property type="nucleotide sequence ID" value="XM_639163.1"/>
</dbReference>
<dbReference type="FunCoup" id="Q8T2A4">
    <property type="interactions" value="419"/>
</dbReference>
<dbReference type="STRING" id="44689.Q8T2A4"/>
<dbReference type="PaxDb" id="44689-DDB0302366"/>
<dbReference type="EnsemblProtists" id="EAL70001">
    <property type="protein sequence ID" value="EAL70001"/>
    <property type="gene ID" value="DDB_G0274217"/>
</dbReference>
<dbReference type="GeneID" id="8619683"/>
<dbReference type="KEGG" id="ddi:DDB_G0274217"/>
<dbReference type="dictyBase" id="DDB_G0274217">
    <property type="gene designation" value="lsrA"/>
</dbReference>
<dbReference type="VEuPathDB" id="AmoebaDB:DDB_G0274217"/>
<dbReference type="eggNOG" id="KOG2422">
    <property type="taxonomic scope" value="Eukaryota"/>
</dbReference>
<dbReference type="HOGENOM" id="CLU_375281_0_0_1"/>
<dbReference type="InParanoid" id="Q8T2A4"/>
<dbReference type="OMA" id="IWGKMPP"/>
<dbReference type="PhylomeDB" id="Q8T2A4"/>
<dbReference type="PRO" id="PR:Q8T2A4"/>
<dbReference type="Proteomes" id="UP000002195">
    <property type="component" value="Chromosome 2"/>
</dbReference>
<dbReference type="GO" id="GO:0071944">
    <property type="term" value="C:cell periphery"/>
    <property type="evidence" value="ECO:0000314"/>
    <property type="project" value="dictyBase"/>
</dbReference>
<dbReference type="GO" id="GO:0005829">
    <property type="term" value="C:cytosol"/>
    <property type="evidence" value="ECO:0007669"/>
    <property type="project" value="UniProtKB-SubCell"/>
</dbReference>
<dbReference type="GO" id="GO:0005634">
    <property type="term" value="C:nucleus"/>
    <property type="evidence" value="ECO:0000314"/>
    <property type="project" value="dictyBase"/>
</dbReference>
<dbReference type="GO" id="GO:1990112">
    <property type="term" value="C:RQC complex"/>
    <property type="evidence" value="ECO:0000318"/>
    <property type="project" value="GO_Central"/>
</dbReference>
<dbReference type="GO" id="GO:0003677">
    <property type="term" value="F:DNA binding"/>
    <property type="evidence" value="ECO:0007669"/>
    <property type="project" value="UniProtKB-KW"/>
</dbReference>
<dbReference type="GO" id="GO:0003714">
    <property type="term" value="F:transcription corepressor activity"/>
    <property type="evidence" value="ECO:0000250"/>
    <property type="project" value="dictyBase"/>
</dbReference>
<dbReference type="GO" id="GO:0000122">
    <property type="term" value="P:negative regulation of transcription by RNA polymerase II"/>
    <property type="evidence" value="ECO:0000250"/>
    <property type="project" value="dictyBase"/>
</dbReference>
<dbReference type="GO" id="GO:0031149">
    <property type="term" value="P:sorocarp stalk cell differentiation"/>
    <property type="evidence" value="ECO:0000315"/>
    <property type="project" value="dictyBase"/>
</dbReference>
<dbReference type="InterPro" id="IPR006994">
    <property type="entry name" value="TCF25/Rqc1"/>
</dbReference>
<dbReference type="PANTHER" id="PTHR22684">
    <property type="entry name" value="NULP1-RELATED"/>
    <property type="match status" value="1"/>
</dbReference>
<dbReference type="PANTHER" id="PTHR22684:SF0">
    <property type="entry name" value="RIBOSOME QUALITY CONTROL COMPLEX SUBUNIT TCF25"/>
    <property type="match status" value="1"/>
</dbReference>
<dbReference type="Pfam" id="PF04910">
    <property type="entry name" value="Tcf25"/>
    <property type="match status" value="1"/>
</dbReference>
<protein>
    <recommendedName>
        <fullName evidence="4">Ribosome quality control complex subunit TCF25</fullName>
        <shortName>TCF-25</shortName>
    </recommendedName>
    <alternativeName>
        <fullName>Transcription factor 25 homolog</fullName>
    </alternativeName>
</protein>
<organism>
    <name type="scientific">Dictyostelium discoideum</name>
    <name type="common">Social amoeba</name>
    <dbReference type="NCBI Taxonomy" id="44689"/>
    <lineage>
        <taxon>Eukaryota</taxon>
        <taxon>Amoebozoa</taxon>
        <taxon>Evosea</taxon>
        <taxon>Eumycetozoa</taxon>
        <taxon>Dictyostelia</taxon>
        <taxon>Dictyosteliales</taxon>
        <taxon>Dictyosteliaceae</taxon>
        <taxon>Dictyostelium</taxon>
    </lineage>
</organism>
<evidence type="ECO:0000250" key="1">
    <source>
        <dbReference type="UniProtKB" id="Q9BQ70"/>
    </source>
</evidence>
<evidence type="ECO:0000255" key="2"/>
<evidence type="ECO:0000256" key="3">
    <source>
        <dbReference type="SAM" id="MobiDB-lite"/>
    </source>
</evidence>
<evidence type="ECO:0000305" key="4"/>
<accession>Q8T2A4</accession>
<accession>Q554R8</accession>
<reference key="1">
    <citation type="journal article" date="2002" name="Nature">
        <title>Sequence and analysis of chromosome 2 of Dictyostelium discoideum.</title>
        <authorList>
            <person name="Gloeckner G."/>
            <person name="Eichinger L."/>
            <person name="Szafranski K."/>
            <person name="Pachebat J.A."/>
            <person name="Bankier A.T."/>
            <person name="Dear P.H."/>
            <person name="Lehmann R."/>
            <person name="Baumgart C."/>
            <person name="Parra G."/>
            <person name="Abril J.F."/>
            <person name="Guigo R."/>
            <person name="Kumpf K."/>
            <person name="Tunggal B."/>
            <person name="Cox E.C."/>
            <person name="Quail M.A."/>
            <person name="Platzer M."/>
            <person name="Rosenthal A."/>
            <person name="Noegel A.A."/>
        </authorList>
    </citation>
    <scope>NUCLEOTIDE SEQUENCE [LARGE SCALE GENOMIC DNA]</scope>
    <source>
        <strain>AX4</strain>
    </source>
</reference>
<reference key="2">
    <citation type="journal article" date="2005" name="Nature">
        <title>The genome of the social amoeba Dictyostelium discoideum.</title>
        <authorList>
            <person name="Eichinger L."/>
            <person name="Pachebat J.A."/>
            <person name="Gloeckner G."/>
            <person name="Rajandream M.A."/>
            <person name="Sucgang R."/>
            <person name="Berriman M."/>
            <person name="Song J."/>
            <person name="Olsen R."/>
            <person name="Szafranski K."/>
            <person name="Xu Q."/>
            <person name="Tunggal B."/>
            <person name="Kummerfeld S."/>
            <person name="Madera M."/>
            <person name="Konfortov B.A."/>
            <person name="Rivero F."/>
            <person name="Bankier A.T."/>
            <person name="Lehmann R."/>
            <person name="Hamlin N."/>
            <person name="Davies R."/>
            <person name="Gaudet P."/>
            <person name="Fey P."/>
            <person name="Pilcher K."/>
            <person name="Chen G."/>
            <person name="Saunders D."/>
            <person name="Sodergren E.J."/>
            <person name="Davis P."/>
            <person name="Kerhornou A."/>
            <person name="Nie X."/>
            <person name="Hall N."/>
            <person name="Anjard C."/>
            <person name="Hemphill L."/>
            <person name="Bason N."/>
            <person name="Farbrother P."/>
            <person name="Desany B."/>
            <person name="Just E."/>
            <person name="Morio T."/>
            <person name="Rost R."/>
            <person name="Churcher C.M."/>
            <person name="Cooper J."/>
            <person name="Haydock S."/>
            <person name="van Driessche N."/>
            <person name="Cronin A."/>
            <person name="Goodhead I."/>
            <person name="Muzny D.M."/>
            <person name="Mourier T."/>
            <person name="Pain A."/>
            <person name="Lu M."/>
            <person name="Harper D."/>
            <person name="Lindsay R."/>
            <person name="Hauser H."/>
            <person name="James K.D."/>
            <person name="Quiles M."/>
            <person name="Madan Babu M."/>
            <person name="Saito T."/>
            <person name="Buchrieser C."/>
            <person name="Wardroper A."/>
            <person name="Felder M."/>
            <person name="Thangavelu M."/>
            <person name="Johnson D."/>
            <person name="Knights A."/>
            <person name="Loulseged H."/>
            <person name="Mungall K.L."/>
            <person name="Oliver K."/>
            <person name="Price C."/>
            <person name="Quail M.A."/>
            <person name="Urushihara H."/>
            <person name="Hernandez J."/>
            <person name="Rabbinowitsch E."/>
            <person name="Steffen D."/>
            <person name="Sanders M."/>
            <person name="Ma J."/>
            <person name="Kohara Y."/>
            <person name="Sharp S."/>
            <person name="Simmonds M.N."/>
            <person name="Spiegler S."/>
            <person name="Tivey A."/>
            <person name="Sugano S."/>
            <person name="White B."/>
            <person name="Walker D."/>
            <person name="Woodward J.R."/>
            <person name="Winckler T."/>
            <person name="Tanaka Y."/>
            <person name="Shaulsky G."/>
            <person name="Schleicher M."/>
            <person name="Weinstock G.M."/>
            <person name="Rosenthal A."/>
            <person name="Cox E.C."/>
            <person name="Chisholm R.L."/>
            <person name="Gibbs R.A."/>
            <person name="Loomis W.F."/>
            <person name="Platzer M."/>
            <person name="Kay R.R."/>
            <person name="Williams J.G."/>
            <person name="Dear P.H."/>
            <person name="Noegel A.A."/>
            <person name="Barrell B.G."/>
            <person name="Kuspa A."/>
        </authorList>
    </citation>
    <scope>NUCLEOTIDE SEQUENCE [LARGE SCALE GENOMIC DNA]</scope>
    <source>
        <strain>AX4</strain>
    </source>
</reference>
<proteinExistence type="inferred from homology"/>